<accession>A0PYB4</accession>
<protein>
    <recommendedName>
        <fullName evidence="1">UDP-N-acetylenolpyruvoylglucosamine reductase</fullName>
        <ecNumber evidence="1">1.3.1.98</ecNumber>
    </recommendedName>
    <alternativeName>
        <fullName evidence="1">UDP-N-acetylmuramate dehydrogenase</fullName>
    </alternativeName>
</protein>
<dbReference type="EC" id="1.3.1.98" evidence="1"/>
<dbReference type="EMBL" id="CP000382">
    <property type="protein sequence ID" value="ABK60939.1"/>
    <property type="molecule type" value="Genomic_DNA"/>
</dbReference>
<dbReference type="RefSeq" id="WP_011721374.1">
    <property type="nucleotide sequence ID" value="NC_008593.1"/>
</dbReference>
<dbReference type="SMR" id="A0PYB4"/>
<dbReference type="STRING" id="386415.NT01CX_1283"/>
<dbReference type="KEGG" id="cno:NT01CX_1283"/>
<dbReference type="eggNOG" id="COG0812">
    <property type="taxonomic scope" value="Bacteria"/>
</dbReference>
<dbReference type="HOGENOM" id="CLU_035304_1_1_9"/>
<dbReference type="UniPathway" id="UPA00219"/>
<dbReference type="Proteomes" id="UP000008220">
    <property type="component" value="Chromosome"/>
</dbReference>
<dbReference type="GO" id="GO:0005829">
    <property type="term" value="C:cytosol"/>
    <property type="evidence" value="ECO:0007669"/>
    <property type="project" value="TreeGrafter"/>
</dbReference>
<dbReference type="GO" id="GO:0071949">
    <property type="term" value="F:FAD binding"/>
    <property type="evidence" value="ECO:0007669"/>
    <property type="project" value="InterPro"/>
</dbReference>
<dbReference type="GO" id="GO:0008762">
    <property type="term" value="F:UDP-N-acetylmuramate dehydrogenase activity"/>
    <property type="evidence" value="ECO:0007669"/>
    <property type="project" value="UniProtKB-UniRule"/>
</dbReference>
<dbReference type="GO" id="GO:0051301">
    <property type="term" value="P:cell division"/>
    <property type="evidence" value="ECO:0007669"/>
    <property type="project" value="UniProtKB-KW"/>
</dbReference>
<dbReference type="GO" id="GO:0071555">
    <property type="term" value="P:cell wall organization"/>
    <property type="evidence" value="ECO:0007669"/>
    <property type="project" value="UniProtKB-KW"/>
</dbReference>
<dbReference type="GO" id="GO:0009252">
    <property type="term" value="P:peptidoglycan biosynthetic process"/>
    <property type="evidence" value="ECO:0007669"/>
    <property type="project" value="UniProtKB-UniRule"/>
</dbReference>
<dbReference type="GO" id="GO:0008360">
    <property type="term" value="P:regulation of cell shape"/>
    <property type="evidence" value="ECO:0007669"/>
    <property type="project" value="UniProtKB-KW"/>
</dbReference>
<dbReference type="Gene3D" id="3.30.465.10">
    <property type="match status" value="1"/>
</dbReference>
<dbReference type="Gene3D" id="3.90.78.10">
    <property type="entry name" value="UDP-N-acetylenolpyruvoylglucosamine reductase, C-terminal domain"/>
    <property type="match status" value="1"/>
</dbReference>
<dbReference type="Gene3D" id="3.30.43.10">
    <property type="entry name" value="Uridine Diphospho-n-acetylenolpyruvylglucosamine Reductase, domain 2"/>
    <property type="match status" value="1"/>
</dbReference>
<dbReference type="HAMAP" id="MF_00037">
    <property type="entry name" value="MurB"/>
    <property type="match status" value="1"/>
</dbReference>
<dbReference type="InterPro" id="IPR016166">
    <property type="entry name" value="FAD-bd_PCMH"/>
</dbReference>
<dbReference type="InterPro" id="IPR036318">
    <property type="entry name" value="FAD-bd_PCMH-like_sf"/>
</dbReference>
<dbReference type="InterPro" id="IPR016167">
    <property type="entry name" value="FAD-bd_PCMH_sub1"/>
</dbReference>
<dbReference type="InterPro" id="IPR016169">
    <property type="entry name" value="FAD-bd_PCMH_sub2"/>
</dbReference>
<dbReference type="InterPro" id="IPR003170">
    <property type="entry name" value="MurB"/>
</dbReference>
<dbReference type="InterPro" id="IPR011601">
    <property type="entry name" value="MurB_C"/>
</dbReference>
<dbReference type="InterPro" id="IPR036635">
    <property type="entry name" value="MurB_C_sf"/>
</dbReference>
<dbReference type="InterPro" id="IPR006094">
    <property type="entry name" value="Oxid_FAD_bind_N"/>
</dbReference>
<dbReference type="NCBIfam" id="TIGR00179">
    <property type="entry name" value="murB"/>
    <property type="match status" value="1"/>
</dbReference>
<dbReference type="NCBIfam" id="NF010480">
    <property type="entry name" value="PRK13905.1"/>
    <property type="match status" value="1"/>
</dbReference>
<dbReference type="PANTHER" id="PTHR21071">
    <property type="entry name" value="UDP-N-ACETYLENOLPYRUVOYLGLUCOSAMINE REDUCTASE"/>
    <property type="match status" value="1"/>
</dbReference>
<dbReference type="PANTHER" id="PTHR21071:SF4">
    <property type="entry name" value="UDP-N-ACETYLENOLPYRUVOYLGLUCOSAMINE REDUCTASE"/>
    <property type="match status" value="1"/>
</dbReference>
<dbReference type="Pfam" id="PF01565">
    <property type="entry name" value="FAD_binding_4"/>
    <property type="match status" value="1"/>
</dbReference>
<dbReference type="Pfam" id="PF02873">
    <property type="entry name" value="MurB_C"/>
    <property type="match status" value="1"/>
</dbReference>
<dbReference type="SUPFAM" id="SSF56176">
    <property type="entry name" value="FAD-binding/transporter-associated domain-like"/>
    <property type="match status" value="1"/>
</dbReference>
<dbReference type="SUPFAM" id="SSF56194">
    <property type="entry name" value="Uridine diphospho-N-Acetylenolpyruvylglucosamine reductase, MurB, C-terminal domain"/>
    <property type="match status" value="1"/>
</dbReference>
<dbReference type="PROSITE" id="PS51387">
    <property type="entry name" value="FAD_PCMH"/>
    <property type="match status" value="1"/>
</dbReference>
<keyword id="KW-0131">Cell cycle</keyword>
<keyword id="KW-0132">Cell division</keyword>
<keyword id="KW-0133">Cell shape</keyword>
<keyword id="KW-0961">Cell wall biogenesis/degradation</keyword>
<keyword id="KW-0963">Cytoplasm</keyword>
<keyword id="KW-0274">FAD</keyword>
<keyword id="KW-0285">Flavoprotein</keyword>
<keyword id="KW-0521">NADP</keyword>
<keyword id="KW-0560">Oxidoreductase</keyword>
<keyword id="KW-0573">Peptidoglycan synthesis</keyword>
<keyword id="KW-1185">Reference proteome</keyword>
<organism>
    <name type="scientific">Clostridium novyi (strain NT)</name>
    <dbReference type="NCBI Taxonomy" id="386415"/>
    <lineage>
        <taxon>Bacteria</taxon>
        <taxon>Bacillati</taxon>
        <taxon>Bacillota</taxon>
        <taxon>Clostridia</taxon>
        <taxon>Eubacteriales</taxon>
        <taxon>Clostridiaceae</taxon>
        <taxon>Clostridium</taxon>
    </lineage>
</organism>
<feature type="chain" id="PRO_1000002882" description="UDP-N-acetylenolpyruvoylglucosamine reductase">
    <location>
        <begin position="1"/>
        <end position="307"/>
    </location>
</feature>
<feature type="domain" description="FAD-binding PCMH-type" evidence="1">
    <location>
        <begin position="33"/>
        <end position="198"/>
    </location>
</feature>
<feature type="active site" evidence="1">
    <location>
        <position position="177"/>
    </location>
</feature>
<feature type="active site" description="Proton donor" evidence="1">
    <location>
        <position position="227"/>
    </location>
</feature>
<feature type="active site" evidence="1">
    <location>
        <position position="297"/>
    </location>
</feature>
<name>MURB_CLONN</name>
<gene>
    <name evidence="1" type="primary">murB</name>
    <name type="ordered locus">NT01CX_1283</name>
</gene>
<reference key="1">
    <citation type="journal article" date="2006" name="Nat. Biotechnol.">
        <title>The genome and transcriptomes of the anti-tumor agent Clostridium novyi-NT.</title>
        <authorList>
            <person name="Bettegowda C."/>
            <person name="Huang X."/>
            <person name="Lin J."/>
            <person name="Cheong I."/>
            <person name="Kohli M."/>
            <person name="Szabo S.A."/>
            <person name="Zhang X."/>
            <person name="Diaz L.A. Jr."/>
            <person name="Velculescu V.E."/>
            <person name="Parmigiani G."/>
            <person name="Kinzler K.W."/>
            <person name="Vogelstein B."/>
            <person name="Zhou S."/>
        </authorList>
    </citation>
    <scope>NUCLEOTIDE SEQUENCE [LARGE SCALE GENOMIC DNA]</scope>
    <source>
        <strain>NT</strain>
    </source>
</reference>
<comment type="function">
    <text evidence="1">Cell wall formation.</text>
</comment>
<comment type="catalytic activity">
    <reaction evidence="1">
        <text>UDP-N-acetyl-alpha-D-muramate + NADP(+) = UDP-N-acetyl-3-O-(1-carboxyvinyl)-alpha-D-glucosamine + NADPH + H(+)</text>
        <dbReference type="Rhea" id="RHEA:12248"/>
        <dbReference type="ChEBI" id="CHEBI:15378"/>
        <dbReference type="ChEBI" id="CHEBI:57783"/>
        <dbReference type="ChEBI" id="CHEBI:58349"/>
        <dbReference type="ChEBI" id="CHEBI:68483"/>
        <dbReference type="ChEBI" id="CHEBI:70757"/>
        <dbReference type="EC" id="1.3.1.98"/>
    </reaction>
</comment>
<comment type="cofactor">
    <cofactor evidence="1">
        <name>FAD</name>
        <dbReference type="ChEBI" id="CHEBI:57692"/>
    </cofactor>
</comment>
<comment type="pathway">
    <text evidence="1">Cell wall biogenesis; peptidoglycan biosynthesis.</text>
</comment>
<comment type="subcellular location">
    <subcellularLocation>
        <location evidence="1">Cytoplasm</location>
    </subcellularLocation>
</comment>
<comment type="similarity">
    <text evidence="1">Belongs to the MurB family.</text>
</comment>
<sequence length="307" mass="33469">MVQSIDINKKLESILDKEEIKNNILMKNYTSFKVGGPADIFVTPNSYEKVKGVINICKENNIPYFILGNGSNVLVRDGGIRGVVVSFNKLNKVYAEGNKVIAESGTLLSMVANTALKSDLTGLEFAHGIPGSVGGAVTMNAGAYNGEISQVIESATVIDNNGKIIKLSKEELDLSYRNSIILKNGYVVLNATFALQKGDHDAIKGRMDDLMRRRKEKQPLEYPSAGSTFKRPEGYFAAKLIEDSGLKGTHVGDAEVSIKHSGFLINKGKASAKDILDLIEVVKKTVKEKFNVELNTEVRIVGEESEN</sequence>
<evidence type="ECO:0000255" key="1">
    <source>
        <dbReference type="HAMAP-Rule" id="MF_00037"/>
    </source>
</evidence>
<proteinExistence type="inferred from homology"/>